<sequence>MVLGRGLLGRRSLAALGAACARRGLGPALLGVLHHTDLRKNLTVDEGTMKVEVLPALTDNYMYLVIDDETKEAAIVDPVQPQKVLDAARKHGVKLTTVLTTHHHWDHAGGNEKLVKLQSGLKVYGGDDRIGALTHKITHLSTLQVGSLNVKCLATPCHTSGHICYFVSRPGGSEPPAVFTGDTLFVAGCGKFYEGTADEMCKALLEVLGRLPPDTRVYCGHEYTINNLKFARHVEPGNAAIQEKLAWAKEKYSIGEPTVPSTLAEEFTYNPFMRVREKTVQQHARETDPVTTMRAVRKEKDEFKMPRD</sequence>
<accession>Q4R6C1</accession>
<name>GLO2_MACFA</name>
<evidence type="ECO:0000250" key="1">
    <source>
        <dbReference type="UniProtKB" id="Q16775"/>
    </source>
</evidence>
<evidence type="ECO:0000250" key="2">
    <source>
        <dbReference type="UniProtKB" id="Q99KB8"/>
    </source>
</evidence>
<evidence type="ECO:0000255" key="3"/>
<evidence type="ECO:0000303" key="4">
    <source ref="1"/>
</evidence>
<evidence type="ECO:0000305" key="5"/>
<organism>
    <name type="scientific">Macaca fascicularis</name>
    <name type="common">Crab-eating macaque</name>
    <name type="synonym">Cynomolgus monkey</name>
    <dbReference type="NCBI Taxonomy" id="9541"/>
    <lineage>
        <taxon>Eukaryota</taxon>
        <taxon>Metazoa</taxon>
        <taxon>Chordata</taxon>
        <taxon>Craniata</taxon>
        <taxon>Vertebrata</taxon>
        <taxon>Euteleostomi</taxon>
        <taxon>Mammalia</taxon>
        <taxon>Eutheria</taxon>
        <taxon>Euarchontoglires</taxon>
        <taxon>Primates</taxon>
        <taxon>Haplorrhini</taxon>
        <taxon>Catarrhini</taxon>
        <taxon>Cercopithecidae</taxon>
        <taxon>Cercopithecinae</taxon>
        <taxon>Macaca</taxon>
    </lineage>
</organism>
<proteinExistence type="evidence at transcript level"/>
<keyword id="KW-0007">Acetylation</keyword>
<keyword id="KW-0024">Alternative initiation</keyword>
<keyword id="KW-0025">Alternative splicing</keyword>
<keyword id="KW-0963">Cytoplasm</keyword>
<keyword id="KW-0378">Hydrolase</keyword>
<keyword id="KW-0479">Metal-binding</keyword>
<keyword id="KW-0496">Mitochondrion</keyword>
<keyword id="KW-1185">Reference proteome</keyword>
<keyword id="KW-0809">Transit peptide</keyword>
<keyword id="KW-0862">Zinc</keyword>
<reference key="1">
    <citation type="submission" date="2005-06" db="EMBL/GenBank/DDBJ databases">
        <title>DNA sequences of macaque genes expressed in brain or testis and its evolutionary implications.</title>
        <authorList>
            <consortium name="International consortium for macaque cDNA sequencing and analysis"/>
        </authorList>
    </citation>
    <scope>NUCLEOTIDE SEQUENCE [LARGE SCALE MRNA] (ISOFORMS 1 AND 2)</scope>
    <source>
        <tissue>Frontal cortex</tissue>
        <tissue>Testis</tissue>
    </source>
</reference>
<comment type="function">
    <text evidence="1">Thiolesterase that catalyzes the hydrolysis of S-D-lactoyl-glutathione to form glutathione and D-lactic acid.</text>
</comment>
<comment type="catalytic activity">
    <reaction evidence="1">
        <text>an S-(2-hydroxyacyl)glutathione + H2O = a 2-hydroxy carboxylate + glutathione + H(+)</text>
        <dbReference type="Rhea" id="RHEA:21864"/>
        <dbReference type="ChEBI" id="CHEBI:15377"/>
        <dbReference type="ChEBI" id="CHEBI:15378"/>
        <dbReference type="ChEBI" id="CHEBI:57925"/>
        <dbReference type="ChEBI" id="CHEBI:58896"/>
        <dbReference type="ChEBI" id="CHEBI:71261"/>
        <dbReference type="EC" id="3.1.2.6"/>
    </reaction>
    <physiologicalReaction direction="left-to-right" evidence="1">
        <dbReference type="Rhea" id="RHEA:21865"/>
    </physiologicalReaction>
</comment>
<comment type="catalytic activity">
    <reaction evidence="1">
        <text>(R)-S-lactoylglutathione + H2O = (R)-lactate + glutathione + H(+)</text>
        <dbReference type="Rhea" id="RHEA:25245"/>
        <dbReference type="ChEBI" id="CHEBI:15377"/>
        <dbReference type="ChEBI" id="CHEBI:15378"/>
        <dbReference type="ChEBI" id="CHEBI:16004"/>
        <dbReference type="ChEBI" id="CHEBI:57474"/>
        <dbReference type="ChEBI" id="CHEBI:57925"/>
        <dbReference type="EC" id="3.1.2.6"/>
    </reaction>
    <physiologicalReaction direction="left-to-right" evidence="1">
        <dbReference type="Rhea" id="RHEA:25246"/>
    </physiologicalReaction>
</comment>
<comment type="cofactor">
    <cofactor evidence="1">
        <name>Zn(2+)</name>
        <dbReference type="ChEBI" id="CHEBI:29105"/>
    </cofactor>
    <text evidence="1">Binds 2 Zn(2+) ions per subunit.</text>
</comment>
<comment type="pathway">
    <text>Secondary metabolite metabolism; methylglyoxal degradation; (R)-lactate from methylglyoxal: step 2/2.</text>
</comment>
<comment type="subunit">
    <text evidence="1">Monomer.</text>
</comment>
<comment type="subcellular location">
    <molecule>Isoform 1</molecule>
    <subcellularLocation>
        <location evidence="1">Mitochondrion matrix</location>
    </subcellularLocation>
</comment>
<comment type="subcellular location">
    <molecule>Isoform 2</molecule>
    <subcellularLocation>
        <location evidence="1">Cytoplasm</location>
    </subcellularLocation>
</comment>
<comment type="alternative products">
    <event type="alternative splicing"/>
    <event type="alternative initiation"/>
    <isoform>
        <id>Q4R6C1-1</id>
        <name>1</name>
        <sequence type="displayed"/>
    </isoform>
    <isoform>
        <id>Q4R6C1-2</id>
        <name>2</name>
        <sequence type="described" ref="VSP_037930"/>
    </isoform>
</comment>
<comment type="tissue specificity">
    <text>Testis.</text>
</comment>
<comment type="miscellaneous">
    <molecule>Isoform 2</molecule>
    <text evidence="5">Produced by alternative splicing. Also produced by alternative initiation at Met-49 of isoform 1. Alternative initiation has been proven in human.</text>
</comment>
<comment type="similarity">
    <text evidence="5">Belongs to the metallo-beta-lactamase superfamily. Glyoxalase II family.</text>
</comment>
<comment type="caution">
    <text evidence="5">Only one single gene encoding glyoxalase II has been identified in vertebrates. In yeast and higher plants, separate genes encode the cytosolic and mitochondrial forms of glyoxalase II.</text>
</comment>
<gene>
    <name type="primary">HAGH</name>
    <name type="ORF">QflA-22824</name>
    <name type="ORF">QtsA-18362</name>
</gene>
<feature type="transit peptide" description="Mitochondrion" evidence="3">
    <location>
        <begin position="1"/>
        <end position="13"/>
    </location>
</feature>
<feature type="chain" id="PRO_0000278565" description="Hydroxyacylglutathione hydrolase, mitochondrial">
    <location>
        <begin position="14"/>
        <end position="308"/>
    </location>
</feature>
<feature type="binding site" evidence="1">
    <location>
        <position position="102"/>
    </location>
    <ligand>
        <name>Zn(2+)</name>
        <dbReference type="ChEBI" id="CHEBI:29105"/>
        <label>1</label>
    </ligand>
</feature>
<feature type="binding site" evidence="1">
    <location>
        <position position="104"/>
    </location>
    <ligand>
        <name>Zn(2+)</name>
        <dbReference type="ChEBI" id="CHEBI:29105"/>
        <label>1</label>
    </ligand>
</feature>
<feature type="binding site" evidence="1">
    <location>
        <position position="106"/>
    </location>
    <ligand>
        <name>Zn(2+)</name>
        <dbReference type="ChEBI" id="CHEBI:29105"/>
        <label>2</label>
    </ligand>
</feature>
<feature type="binding site" evidence="1">
    <location>
        <position position="107"/>
    </location>
    <ligand>
        <name>Zn(2+)</name>
        <dbReference type="ChEBI" id="CHEBI:29105"/>
        <label>2</label>
    </ligand>
</feature>
<feature type="binding site" evidence="1">
    <location>
        <position position="158"/>
    </location>
    <ligand>
        <name>Zn(2+)</name>
        <dbReference type="ChEBI" id="CHEBI:29105"/>
        <label>1</label>
    </ligand>
</feature>
<feature type="binding site" evidence="1">
    <location>
        <position position="182"/>
    </location>
    <ligand>
        <name>Zn(2+)</name>
        <dbReference type="ChEBI" id="CHEBI:29105"/>
        <label>1</label>
    </ligand>
</feature>
<feature type="binding site" evidence="1">
    <location>
        <position position="182"/>
    </location>
    <ligand>
        <name>Zn(2+)</name>
        <dbReference type="ChEBI" id="CHEBI:29105"/>
        <label>2</label>
    </ligand>
</feature>
<feature type="binding site" evidence="1">
    <location>
        <begin position="191"/>
        <end position="193"/>
    </location>
    <ligand>
        <name>substrate</name>
    </ligand>
</feature>
<feature type="binding site" evidence="1">
    <location>
        <begin position="221"/>
        <end position="223"/>
    </location>
    <ligand>
        <name>substrate</name>
    </ligand>
</feature>
<feature type="binding site" evidence="1">
    <location>
        <position position="221"/>
    </location>
    <ligand>
        <name>Zn(2+)</name>
        <dbReference type="ChEBI" id="CHEBI:29105"/>
        <label>2</label>
    </ligand>
</feature>
<feature type="binding site" evidence="1">
    <location>
        <begin position="297"/>
        <end position="300"/>
    </location>
    <ligand>
        <name>substrate</name>
    </ligand>
</feature>
<feature type="modified residue" description="N6-acetyllysine" evidence="2">
    <location>
        <position position="116"/>
    </location>
</feature>
<feature type="modified residue" description="N6-acetyllysine; alternate" evidence="1">
    <location>
        <position position="229"/>
    </location>
</feature>
<feature type="modified residue" description="N6-succinyllysine; alternate" evidence="2">
    <location>
        <position position="229"/>
    </location>
</feature>
<feature type="splice variant" id="VSP_037930" description="In isoform 2." evidence="4">
    <location>
        <begin position="1"/>
        <end position="48"/>
    </location>
</feature>
<dbReference type="EC" id="3.1.2.6" evidence="1"/>
<dbReference type="EMBL" id="AB169264">
    <property type="protein sequence ID" value="BAE01354.1"/>
    <property type="molecule type" value="mRNA"/>
</dbReference>
<dbReference type="EMBL" id="AB173495">
    <property type="protein sequence ID" value="BAE90557.1"/>
    <property type="molecule type" value="mRNA"/>
</dbReference>
<dbReference type="RefSeq" id="NP_001270343.1">
    <property type="nucleotide sequence ID" value="NM_001283414.1"/>
</dbReference>
<dbReference type="SMR" id="Q4R6C1"/>
<dbReference type="STRING" id="9541.ENSMFAP00000035273"/>
<dbReference type="eggNOG" id="KOG0813">
    <property type="taxonomic scope" value="Eukaryota"/>
</dbReference>
<dbReference type="UniPathway" id="UPA00619">
    <property type="reaction ID" value="UER00676"/>
</dbReference>
<dbReference type="Proteomes" id="UP000233100">
    <property type="component" value="Unplaced"/>
</dbReference>
<dbReference type="GO" id="GO:0005759">
    <property type="term" value="C:mitochondrial matrix"/>
    <property type="evidence" value="ECO:0007669"/>
    <property type="project" value="UniProtKB-SubCell"/>
</dbReference>
<dbReference type="GO" id="GO:0004416">
    <property type="term" value="F:hydroxyacylglutathione hydrolase activity"/>
    <property type="evidence" value="ECO:0000250"/>
    <property type="project" value="UniProtKB"/>
</dbReference>
<dbReference type="GO" id="GO:0046872">
    <property type="term" value="F:metal ion binding"/>
    <property type="evidence" value="ECO:0007669"/>
    <property type="project" value="UniProtKB-KW"/>
</dbReference>
<dbReference type="GO" id="GO:0006749">
    <property type="term" value="P:glutathione metabolic process"/>
    <property type="evidence" value="ECO:0007669"/>
    <property type="project" value="TreeGrafter"/>
</dbReference>
<dbReference type="GO" id="GO:0019243">
    <property type="term" value="P:methylglyoxal catabolic process to D-lactate via S-lactoyl-glutathione"/>
    <property type="evidence" value="ECO:0007669"/>
    <property type="project" value="InterPro"/>
</dbReference>
<dbReference type="CDD" id="cd07723">
    <property type="entry name" value="hydroxyacylglutathione_hydrolase_MBL-fold"/>
    <property type="match status" value="1"/>
</dbReference>
<dbReference type="FunFam" id="3.60.15.10:FF:000019">
    <property type="entry name" value="Hydroxyacylglutathione hydrolase, mitochondrial"/>
    <property type="match status" value="1"/>
</dbReference>
<dbReference type="Gene3D" id="3.60.15.10">
    <property type="entry name" value="Ribonuclease Z/Hydroxyacylglutathione hydrolase-like"/>
    <property type="match status" value="1"/>
</dbReference>
<dbReference type="HAMAP" id="MF_01374">
    <property type="entry name" value="Glyoxalase_2"/>
    <property type="match status" value="1"/>
</dbReference>
<dbReference type="InterPro" id="IPR035680">
    <property type="entry name" value="Clx_II_MBL"/>
</dbReference>
<dbReference type="InterPro" id="IPR032282">
    <property type="entry name" value="HAGH_C"/>
</dbReference>
<dbReference type="InterPro" id="IPR017782">
    <property type="entry name" value="Hydroxyacylglutathione_Hdrlase"/>
</dbReference>
<dbReference type="InterPro" id="IPR001279">
    <property type="entry name" value="Metallo-B-lactamas"/>
</dbReference>
<dbReference type="InterPro" id="IPR036866">
    <property type="entry name" value="RibonucZ/Hydroxyglut_hydro"/>
</dbReference>
<dbReference type="NCBIfam" id="TIGR03413">
    <property type="entry name" value="GSH_gloB"/>
    <property type="match status" value="1"/>
</dbReference>
<dbReference type="PANTHER" id="PTHR11935">
    <property type="entry name" value="BETA LACTAMASE DOMAIN"/>
    <property type="match status" value="1"/>
</dbReference>
<dbReference type="PANTHER" id="PTHR11935:SF80">
    <property type="entry name" value="HYDROXYACYLGLUTATHIONE HYDROLASE, MITOCHONDRIAL"/>
    <property type="match status" value="1"/>
</dbReference>
<dbReference type="Pfam" id="PF16123">
    <property type="entry name" value="HAGH_C"/>
    <property type="match status" value="1"/>
</dbReference>
<dbReference type="Pfam" id="PF00753">
    <property type="entry name" value="Lactamase_B"/>
    <property type="match status" value="1"/>
</dbReference>
<dbReference type="PIRSF" id="PIRSF005457">
    <property type="entry name" value="Glx"/>
    <property type="match status" value="1"/>
</dbReference>
<dbReference type="SMART" id="SM00849">
    <property type="entry name" value="Lactamase_B"/>
    <property type="match status" value="1"/>
</dbReference>
<dbReference type="SUPFAM" id="SSF56281">
    <property type="entry name" value="Metallo-hydrolase/oxidoreductase"/>
    <property type="match status" value="1"/>
</dbReference>
<protein>
    <recommendedName>
        <fullName>Hydroxyacylglutathione hydrolase, mitochondrial</fullName>
        <ecNumber evidence="1">3.1.2.6</ecNumber>
    </recommendedName>
    <alternativeName>
        <fullName>Glyoxalase II</fullName>
        <shortName>Glx II</shortName>
    </alternativeName>
</protein>